<reference key="1">
    <citation type="journal article" date="2008" name="J. Bacteriol.">
        <title>Complete genome sequence of Neisseria gonorrhoeae NCCP11945.</title>
        <authorList>
            <person name="Chung G.T."/>
            <person name="Yoo J.S."/>
            <person name="Oh H.B."/>
            <person name="Lee Y.S."/>
            <person name="Cha S.H."/>
            <person name="Kim S.J."/>
            <person name="Yoo C.K."/>
        </authorList>
    </citation>
    <scope>NUCLEOTIDE SEQUENCE [LARGE SCALE GENOMIC DNA]</scope>
    <source>
        <strain>NCCP11945</strain>
    </source>
</reference>
<feature type="chain" id="PRO_1000188647" description="tRNA-cytidine(32) 2-sulfurtransferase">
    <location>
        <begin position="1"/>
        <end position="319"/>
    </location>
</feature>
<feature type="short sequence motif" description="PP-loop motif" evidence="1">
    <location>
        <begin position="43"/>
        <end position="48"/>
    </location>
</feature>
<feature type="binding site" evidence="1">
    <location>
        <position position="118"/>
    </location>
    <ligand>
        <name>[4Fe-4S] cluster</name>
        <dbReference type="ChEBI" id="CHEBI:49883"/>
    </ligand>
</feature>
<feature type="binding site" evidence="1">
    <location>
        <position position="121"/>
    </location>
    <ligand>
        <name>[4Fe-4S] cluster</name>
        <dbReference type="ChEBI" id="CHEBI:49883"/>
    </ligand>
</feature>
<feature type="binding site" evidence="1">
    <location>
        <position position="209"/>
    </location>
    <ligand>
        <name>[4Fe-4S] cluster</name>
        <dbReference type="ChEBI" id="CHEBI:49883"/>
    </ligand>
</feature>
<protein>
    <recommendedName>
        <fullName evidence="1">tRNA-cytidine(32) 2-sulfurtransferase</fullName>
        <ecNumber evidence="1">2.8.1.-</ecNumber>
    </recommendedName>
    <alternativeName>
        <fullName evidence="1">Two-thiocytidine biosynthesis protein A</fullName>
    </alternativeName>
    <alternativeName>
        <fullName evidence="1">tRNA 2-thiocytidine biosynthesis protein TtcA</fullName>
    </alternativeName>
</protein>
<name>TTCA_NEIG2</name>
<evidence type="ECO:0000255" key="1">
    <source>
        <dbReference type="HAMAP-Rule" id="MF_01850"/>
    </source>
</evidence>
<dbReference type="EC" id="2.8.1.-" evidence="1"/>
<dbReference type="EMBL" id="CP001050">
    <property type="protein sequence ID" value="ACF30056.1"/>
    <property type="molecule type" value="Genomic_DNA"/>
</dbReference>
<dbReference type="RefSeq" id="WP_003689014.1">
    <property type="nucleotide sequence ID" value="NC_011035.1"/>
</dbReference>
<dbReference type="SMR" id="B4RMM2"/>
<dbReference type="GeneID" id="66752886"/>
<dbReference type="KEGG" id="ngk:NGK_1382"/>
<dbReference type="HOGENOM" id="CLU_026481_0_0_4"/>
<dbReference type="Proteomes" id="UP000002564">
    <property type="component" value="Chromosome"/>
</dbReference>
<dbReference type="GO" id="GO:0005737">
    <property type="term" value="C:cytoplasm"/>
    <property type="evidence" value="ECO:0007669"/>
    <property type="project" value="UniProtKB-SubCell"/>
</dbReference>
<dbReference type="GO" id="GO:0051539">
    <property type="term" value="F:4 iron, 4 sulfur cluster binding"/>
    <property type="evidence" value="ECO:0007669"/>
    <property type="project" value="UniProtKB-UniRule"/>
</dbReference>
<dbReference type="GO" id="GO:0005524">
    <property type="term" value="F:ATP binding"/>
    <property type="evidence" value="ECO:0007669"/>
    <property type="project" value="UniProtKB-UniRule"/>
</dbReference>
<dbReference type="GO" id="GO:0000287">
    <property type="term" value="F:magnesium ion binding"/>
    <property type="evidence" value="ECO:0007669"/>
    <property type="project" value="UniProtKB-UniRule"/>
</dbReference>
<dbReference type="GO" id="GO:0016783">
    <property type="term" value="F:sulfurtransferase activity"/>
    <property type="evidence" value="ECO:0007669"/>
    <property type="project" value="UniProtKB-UniRule"/>
</dbReference>
<dbReference type="GO" id="GO:0000049">
    <property type="term" value="F:tRNA binding"/>
    <property type="evidence" value="ECO:0007669"/>
    <property type="project" value="UniProtKB-KW"/>
</dbReference>
<dbReference type="GO" id="GO:0034227">
    <property type="term" value="P:tRNA thio-modification"/>
    <property type="evidence" value="ECO:0007669"/>
    <property type="project" value="UniProtKB-UniRule"/>
</dbReference>
<dbReference type="CDD" id="cd24138">
    <property type="entry name" value="TtcA-like"/>
    <property type="match status" value="1"/>
</dbReference>
<dbReference type="Gene3D" id="3.40.50.620">
    <property type="entry name" value="HUPs"/>
    <property type="match status" value="1"/>
</dbReference>
<dbReference type="HAMAP" id="MF_01850">
    <property type="entry name" value="TtcA"/>
    <property type="match status" value="1"/>
</dbReference>
<dbReference type="InterPro" id="IPR014729">
    <property type="entry name" value="Rossmann-like_a/b/a_fold"/>
</dbReference>
<dbReference type="InterPro" id="IPR011063">
    <property type="entry name" value="TilS/TtcA_N"/>
</dbReference>
<dbReference type="InterPro" id="IPR012089">
    <property type="entry name" value="tRNA_Cyd_32_2_STrfase"/>
</dbReference>
<dbReference type="InterPro" id="IPR035107">
    <property type="entry name" value="tRNA_thiolation_TtcA_Ctu1"/>
</dbReference>
<dbReference type="NCBIfam" id="NF007972">
    <property type="entry name" value="PRK10696.1"/>
    <property type="match status" value="1"/>
</dbReference>
<dbReference type="PANTHER" id="PTHR43686:SF1">
    <property type="entry name" value="AMINOTRAN_5 DOMAIN-CONTAINING PROTEIN"/>
    <property type="match status" value="1"/>
</dbReference>
<dbReference type="PANTHER" id="PTHR43686">
    <property type="entry name" value="SULFURTRANSFERASE-RELATED"/>
    <property type="match status" value="1"/>
</dbReference>
<dbReference type="Pfam" id="PF01171">
    <property type="entry name" value="ATP_bind_3"/>
    <property type="match status" value="1"/>
</dbReference>
<dbReference type="PIRSF" id="PIRSF004976">
    <property type="entry name" value="ATPase_YdaO"/>
    <property type="match status" value="1"/>
</dbReference>
<dbReference type="SUPFAM" id="SSF52402">
    <property type="entry name" value="Adenine nucleotide alpha hydrolases-like"/>
    <property type="match status" value="1"/>
</dbReference>
<comment type="function">
    <text evidence="1">Catalyzes the ATP-dependent 2-thiolation of cytidine in position 32 of tRNA, to form 2-thiocytidine (s(2)C32). The sulfur atoms are provided by the cysteine/cysteine desulfurase (IscS) system.</text>
</comment>
<comment type="catalytic activity">
    <reaction evidence="1">
        <text>cytidine(32) in tRNA + S-sulfanyl-L-cysteinyl-[cysteine desulfurase] + AH2 + ATP = 2-thiocytidine(32) in tRNA + L-cysteinyl-[cysteine desulfurase] + A + AMP + diphosphate + H(+)</text>
        <dbReference type="Rhea" id="RHEA:57048"/>
        <dbReference type="Rhea" id="RHEA-COMP:10288"/>
        <dbReference type="Rhea" id="RHEA-COMP:12157"/>
        <dbReference type="Rhea" id="RHEA-COMP:12158"/>
        <dbReference type="Rhea" id="RHEA-COMP:14821"/>
        <dbReference type="ChEBI" id="CHEBI:13193"/>
        <dbReference type="ChEBI" id="CHEBI:15378"/>
        <dbReference type="ChEBI" id="CHEBI:17499"/>
        <dbReference type="ChEBI" id="CHEBI:29950"/>
        <dbReference type="ChEBI" id="CHEBI:30616"/>
        <dbReference type="ChEBI" id="CHEBI:33019"/>
        <dbReference type="ChEBI" id="CHEBI:61963"/>
        <dbReference type="ChEBI" id="CHEBI:82748"/>
        <dbReference type="ChEBI" id="CHEBI:141453"/>
        <dbReference type="ChEBI" id="CHEBI:456215"/>
    </reaction>
    <physiologicalReaction direction="left-to-right" evidence="1">
        <dbReference type="Rhea" id="RHEA:57049"/>
    </physiologicalReaction>
</comment>
<comment type="cofactor">
    <cofactor evidence="1">
        <name>Mg(2+)</name>
        <dbReference type="ChEBI" id="CHEBI:18420"/>
    </cofactor>
</comment>
<comment type="cofactor">
    <cofactor evidence="1">
        <name>[4Fe-4S] cluster</name>
        <dbReference type="ChEBI" id="CHEBI:49883"/>
    </cofactor>
    <text evidence="1">Binds 1 [4Fe-4S] cluster per subunit. The cluster is chelated by three Cys residues, the fourth Fe has a free coordination site that may bind a sulfur atom transferred from the persulfide of IscS.</text>
</comment>
<comment type="pathway">
    <text evidence="1">tRNA modification.</text>
</comment>
<comment type="subunit">
    <text evidence="1">Homodimer.</text>
</comment>
<comment type="subcellular location">
    <subcellularLocation>
        <location evidence="1">Cytoplasm</location>
    </subcellularLocation>
</comment>
<comment type="miscellaneous">
    <text evidence="1">The thiolation reaction likely consists of two steps: a first activation step by ATP to form an adenylated intermediate of the target base of tRNA, and a second nucleophilic substitution step of the sulfur (S) atom supplied by the hydrosulfide attached to the Fe-S cluster.</text>
</comment>
<comment type="similarity">
    <text evidence="1">Belongs to the TtcA family.</text>
</comment>
<organism>
    <name type="scientific">Neisseria gonorrhoeae (strain NCCP11945)</name>
    <dbReference type="NCBI Taxonomy" id="521006"/>
    <lineage>
        <taxon>Bacteria</taxon>
        <taxon>Pseudomonadati</taxon>
        <taxon>Pseudomonadota</taxon>
        <taxon>Betaproteobacteria</taxon>
        <taxon>Neisseriales</taxon>
        <taxon>Neisseriaceae</taxon>
        <taxon>Neisseria</taxon>
    </lineage>
</organism>
<sequence>MSKKTKQELENNKLSKRLRHAVGDTINDFNMIEPGDKIMVCLSGGKDSYALLDILRRLQASAPIDFELVAVNLDQKQPGFPEEVLPTYLESIGVPYKIVEEDTYSTVKRVLDEGKTTCSLCSRLRRGILYRTAKELGCTKIALGHHRDDILATMFLNMFYGGKLKAMPPKLVSDNGEHIVIRPLAYVKEKDLIKYAELKQFPIIPCNLCGSQPNLQRQVIGDMLRDWDKRFPGRIESMFSALQNVVPSHLADTELFDFAGLERGQNLKHGGDLAFDSEKMPERFSDGSEEDESEIKIEPQKAERKVINILANKPKTCGA</sequence>
<gene>
    <name evidence="1" type="primary">ttcA</name>
    <name type="ordered locus">NGK_1382</name>
</gene>
<proteinExistence type="inferred from homology"/>
<keyword id="KW-0004">4Fe-4S</keyword>
<keyword id="KW-0067">ATP-binding</keyword>
<keyword id="KW-0963">Cytoplasm</keyword>
<keyword id="KW-0408">Iron</keyword>
<keyword id="KW-0411">Iron-sulfur</keyword>
<keyword id="KW-0460">Magnesium</keyword>
<keyword id="KW-0479">Metal-binding</keyword>
<keyword id="KW-0547">Nucleotide-binding</keyword>
<keyword id="KW-0694">RNA-binding</keyword>
<keyword id="KW-0808">Transferase</keyword>
<keyword id="KW-0819">tRNA processing</keyword>
<keyword id="KW-0820">tRNA-binding</keyword>
<accession>B4RMM2</accession>